<name>RF1_XYLFA</name>
<feature type="chain" id="PRO_0000177774" description="Peptide chain release factor 1">
    <location>
        <begin position="1"/>
        <end position="361"/>
    </location>
</feature>
<feature type="region of interest" description="Disordered" evidence="2">
    <location>
        <begin position="284"/>
        <end position="306"/>
    </location>
</feature>
<feature type="modified residue" description="N5-methylglutamine" evidence="1">
    <location>
        <position position="235"/>
    </location>
</feature>
<protein>
    <recommendedName>
        <fullName evidence="1">Peptide chain release factor 1</fullName>
        <shortName evidence="1">RF-1</shortName>
    </recommendedName>
</protein>
<keyword id="KW-0963">Cytoplasm</keyword>
<keyword id="KW-0488">Methylation</keyword>
<keyword id="KW-0648">Protein biosynthesis</keyword>
<reference key="1">
    <citation type="journal article" date="2000" name="Nature">
        <title>The genome sequence of the plant pathogen Xylella fastidiosa.</title>
        <authorList>
            <person name="Simpson A.J.G."/>
            <person name="Reinach F.C."/>
            <person name="Arruda P."/>
            <person name="Abreu F.A."/>
            <person name="Acencio M."/>
            <person name="Alvarenga R."/>
            <person name="Alves L.M.C."/>
            <person name="Araya J.E."/>
            <person name="Baia G.S."/>
            <person name="Baptista C.S."/>
            <person name="Barros M.H."/>
            <person name="Bonaccorsi E.D."/>
            <person name="Bordin S."/>
            <person name="Bove J.M."/>
            <person name="Briones M.R.S."/>
            <person name="Bueno M.R.P."/>
            <person name="Camargo A.A."/>
            <person name="Camargo L.E.A."/>
            <person name="Carraro D.M."/>
            <person name="Carrer H."/>
            <person name="Colauto N.B."/>
            <person name="Colombo C."/>
            <person name="Costa F.F."/>
            <person name="Costa M.C.R."/>
            <person name="Costa-Neto C.M."/>
            <person name="Coutinho L.L."/>
            <person name="Cristofani M."/>
            <person name="Dias-Neto E."/>
            <person name="Docena C."/>
            <person name="El-Dorry H."/>
            <person name="Facincani A.P."/>
            <person name="Ferreira A.J.S."/>
            <person name="Ferreira V.C.A."/>
            <person name="Ferro J.A."/>
            <person name="Fraga J.S."/>
            <person name="Franca S.C."/>
            <person name="Franco M.C."/>
            <person name="Frohme M."/>
            <person name="Furlan L.R."/>
            <person name="Garnier M."/>
            <person name="Goldman G.H."/>
            <person name="Goldman M.H.S."/>
            <person name="Gomes S.L."/>
            <person name="Gruber A."/>
            <person name="Ho P.L."/>
            <person name="Hoheisel J.D."/>
            <person name="Junqueira M.L."/>
            <person name="Kemper E.L."/>
            <person name="Kitajima J.P."/>
            <person name="Krieger J.E."/>
            <person name="Kuramae E.E."/>
            <person name="Laigret F."/>
            <person name="Lambais M.R."/>
            <person name="Leite L.C.C."/>
            <person name="Lemos E.G.M."/>
            <person name="Lemos M.V.F."/>
            <person name="Lopes S.A."/>
            <person name="Lopes C.R."/>
            <person name="Machado J.A."/>
            <person name="Machado M.A."/>
            <person name="Madeira A.M.B.N."/>
            <person name="Madeira H.M.F."/>
            <person name="Marino C.L."/>
            <person name="Marques M.V."/>
            <person name="Martins E.A.L."/>
            <person name="Martins E.M.F."/>
            <person name="Matsukuma A.Y."/>
            <person name="Menck C.F.M."/>
            <person name="Miracca E.C."/>
            <person name="Miyaki C.Y."/>
            <person name="Monteiro-Vitorello C.B."/>
            <person name="Moon D.H."/>
            <person name="Nagai M.A."/>
            <person name="Nascimento A.L.T.O."/>
            <person name="Netto L.E.S."/>
            <person name="Nhani A. Jr."/>
            <person name="Nobrega F.G."/>
            <person name="Nunes L.R."/>
            <person name="Oliveira M.A."/>
            <person name="de Oliveira M.C."/>
            <person name="de Oliveira R.C."/>
            <person name="Palmieri D.A."/>
            <person name="Paris A."/>
            <person name="Peixoto B.R."/>
            <person name="Pereira G.A.G."/>
            <person name="Pereira H.A. Jr."/>
            <person name="Pesquero J.B."/>
            <person name="Quaggio R.B."/>
            <person name="Roberto P.G."/>
            <person name="Rodrigues V."/>
            <person name="de Rosa A.J.M."/>
            <person name="de Rosa V.E. Jr."/>
            <person name="de Sa R.G."/>
            <person name="Santelli R.V."/>
            <person name="Sawasaki H.E."/>
            <person name="da Silva A.C.R."/>
            <person name="da Silva A.M."/>
            <person name="da Silva F.R."/>
            <person name="Silva W.A. Jr."/>
            <person name="da Silveira J.F."/>
            <person name="Silvestri M.L.Z."/>
            <person name="Siqueira W.J."/>
            <person name="de Souza A.A."/>
            <person name="de Souza A.P."/>
            <person name="Terenzi M.F."/>
            <person name="Truffi D."/>
            <person name="Tsai S.M."/>
            <person name="Tsuhako M.H."/>
            <person name="Vallada H."/>
            <person name="Van Sluys M.A."/>
            <person name="Verjovski-Almeida S."/>
            <person name="Vettore A.L."/>
            <person name="Zago M.A."/>
            <person name="Zatz M."/>
            <person name="Meidanis J."/>
            <person name="Setubal J.C."/>
        </authorList>
    </citation>
    <scope>NUCLEOTIDE SEQUENCE [LARGE SCALE GENOMIC DNA]</scope>
    <source>
        <strain>9a5c</strain>
    </source>
</reference>
<gene>
    <name evidence="1" type="primary">prfA</name>
    <name type="ordered locus">XF_2649</name>
</gene>
<accession>Q9PA71</accession>
<comment type="function">
    <text evidence="1">Peptide chain release factor 1 directs the termination of translation in response to the peptide chain termination codons UAG and UAA.</text>
</comment>
<comment type="subcellular location">
    <subcellularLocation>
        <location evidence="1">Cytoplasm</location>
    </subcellularLocation>
</comment>
<comment type="PTM">
    <text evidence="1">Methylated by PrmC. Methylation increases the termination efficiency of RF1.</text>
</comment>
<comment type="similarity">
    <text evidence="1">Belongs to the prokaryotic/mitochondrial release factor family.</text>
</comment>
<evidence type="ECO:0000255" key="1">
    <source>
        <dbReference type="HAMAP-Rule" id="MF_00093"/>
    </source>
</evidence>
<evidence type="ECO:0000256" key="2">
    <source>
        <dbReference type="SAM" id="MobiDB-lite"/>
    </source>
</evidence>
<sequence>MKPTLRRKLEALVERHEELERLLSDPKIVSDTDRFRTYSRELAQLAPIATTLAEETRTKADLAAAETLRTDPEMRELAEQEIAIAQAHLTTLDEELQRLLIPQDPRDECNLFLEVRAGTGGDEAAIFAGNLFRMYTRYAERQRWKVEVESDTPGEHGGYKEIIARIVGRGAYSRLKFESGTHRVQRVPATESQGRIHTSAATVAIIPEADEIADISINPADLKIDTFRSSGAGGQHVNKTESAIRITHLPTGVVVESQTERSQHANRDKAMKRLKAQLIESERSQQATAEAMTRKLQVGSGDRSQRIRTYNFPQGRITDHRVENLTLYDLPNIIEGDLDPLIDRLRQEHQAEELARLSNAP</sequence>
<proteinExistence type="inferred from homology"/>
<dbReference type="EMBL" id="AE003849">
    <property type="protein sequence ID" value="AAF85446.1"/>
    <property type="molecule type" value="Genomic_DNA"/>
</dbReference>
<dbReference type="PIR" id="B82533">
    <property type="entry name" value="B82533"/>
</dbReference>
<dbReference type="RefSeq" id="WP_010895063.1">
    <property type="nucleotide sequence ID" value="NC_002488.3"/>
</dbReference>
<dbReference type="SMR" id="Q9PA71"/>
<dbReference type="STRING" id="160492.XF_2649"/>
<dbReference type="KEGG" id="xfa:XF_2649"/>
<dbReference type="eggNOG" id="COG0216">
    <property type="taxonomic scope" value="Bacteria"/>
</dbReference>
<dbReference type="HOGENOM" id="CLU_036856_0_1_6"/>
<dbReference type="Proteomes" id="UP000000812">
    <property type="component" value="Chromosome"/>
</dbReference>
<dbReference type="GO" id="GO:0005737">
    <property type="term" value="C:cytoplasm"/>
    <property type="evidence" value="ECO:0007669"/>
    <property type="project" value="UniProtKB-SubCell"/>
</dbReference>
<dbReference type="GO" id="GO:0016149">
    <property type="term" value="F:translation release factor activity, codon specific"/>
    <property type="evidence" value="ECO:0007669"/>
    <property type="project" value="UniProtKB-UniRule"/>
</dbReference>
<dbReference type="FunFam" id="3.30.160.20:FF:000004">
    <property type="entry name" value="Peptide chain release factor 1"/>
    <property type="match status" value="1"/>
</dbReference>
<dbReference type="FunFam" id="3.30.70.1660:FF:000002">
    <property type="entry name" value="Peptide chain release factor 1"/>
    <property type="match status" value="1"/>
</dbReference>
<dbReference type="FunFam" id="3.30.70.1660:FF:000004">
    <property type="entry name" value="Peptide chain release factor 1"/>
    <property type="match status" value="1"/>
</dbReference>
<dbReference type="Gene3D" id="3.30.160.20">
    <property type="match status" value="1"/>
</dbReference>
<dbReference type="Gene3D" id="3.30.70.1660">
    <property type="match status" value="1"/>
</dbReference>
<dbReference type="Gene3D" id="6.10.140.1950">
    <property type="match status" value="1"/>
</dbReference>
<dbReference type="HAMAP" id="MF_00093">
    <property type="entry name" value="Rel_fac_1"/>
    <property type="match status" value="1"/>
</dbReference>
<dbReference type="InterPro" id="IPR005139">
    <property type="entry name" value="PCRF"/>
</dbReference>
<dbReference type="InterPro" id="IPR000352">
    <property type="entry name" value="Pep_chain_release_fac_I"/>
</dbReference>
<dbReference type="InterPro" id="IPR045853">
    <property type="entry name" value="Pep_chain_release_fac_I_sf"/>
</dbReference>
<dbReference type="InterPro" id="IPR050057">
    <property type="entry name" value="Prokaryotic/Mito_RF"/>
</dbReference>
<dbReference type="InterPro" id="IPR004373">
    <property type="entry name" value="RF-1"/>
</dbReference>
<dbReference type="NCBIfam" id="TIGR00019">
    <property type="entry name" value="prfA"/>
    <property type="match status" value="1"/>
</dbReference>
<dbReference type="NCBIfam" id="NF001859">
    <property type="entry name" value="PRK00591.1"/>
    <property type="match status" value="1"/>
</dbReference>
<dbReference type="PANTHER" id="PTHR43804">
    <property type="entry name" value="LD18447P"/>
    <property type="match status" value="1"/>
</dbReference>
<dbReference type="PANTHER" id="PTHR43804:SF7">
    <property type="entry name" value="LD18447P"/>
    <property type="match status" value="1"/>
</dbReference>
<dbReference type="Pfam" id="PF03462">
    <property type="entry name" value="PCRF"/>
    <property type="match status" value="1"/>
</dbReference>
<dbReference type="Pfam" id="PF00472">
    <property type="entry name" value="RF-1"/>
    <property type="match status" value="1"/>
</dbReference>
<dbReference type="SMART" id="SM00937">
    <property type="entry name" value="PCRF"/>
    <property type="match status" value="1"/>
</dbReference>
<dbReference type="SUPFAM" id="SSF75620">
    <property type="entry name" value="Release factor"/>
    <property type="match status" value="1"/>
</dbReference>
<dbReference type="PROSITE" id="PS00745">
    <property type="entry name" value="RF_PROK_I"/>
    <property type="match status" value="1"/>
</dbReference>
<organism>
    <name type="scientific">Xylella fastidiosa (strain 9a5c)</name>
    <dbReference type="NCBI Taxonomy" id="160492"/>
    <lineage>
        <taxon>Bacteria</taxon>
        <taxon>Pseudomonadati</taxon>
        <taxon>Pseudomonadota</taxon>
        <taxon>Gammaproteobacteria</taxon>
        <taxon>Lysobacterales</taxon>
        <taxon>Lysobacteraceae</taxon>
        <taxon>Xylella</taxon>
    </lineage>
</organism>